<proteinExistence type="evidence at transcript level"/>
<keyword id="KW-0186">Copper</keyword>
<keyword id="KW-0963">Cytoplasm</keyword>
<keyword id="KW-0456">Lyase</keyword>
<keyword id="KW-0464">Manganese</keyword>
<keyword id="KW-0533">Nickel</keyword>
<keyword id="KW-1185">Reference proteome</keyword>
<name>PLYW_DICD3</name>
<organism>
    <name type="scientific">Dickeya dadantii (strain 3937)</name>
    <name type="common">Erwinia chrysanthemi (strain 3937)</name>
    <dbReference type="NCBI Taxonomy" id="198628"/>
    <lineage>
        <taxon>Bacteria</taxon>
        <taxon>Pseudomonadati</taxon>
        <taxon>Pseudomonadota</taxon>
        <taxon>Gammaproteobacteria</taxon>
        <taxon>Enterobacterales</taxon>
        <taxon>Pectobacteriaceae</taxon>
        <taxon>Dickeya</taxon>
    </lineage>
</organism>
<dbReference type="EC" id="4.2.2.9" evidence="1"/>
<dbReference type="EMBL" id="X62073">
    <property type="protein sequence ID" value="CAA43990.1"/>
    <property type="molecule type" value="Genomic_DNA"/>
</dbReference>
<dbReference type="EMBL" id="CP002038">
    <property type="protein sequence ID" value="ADM98617.1"/>
    <property type="molecule type" value="Genomic_DNA"/>
</dbReference>
<dbReference type="PIR" id="S17712">
    <property type="entry name" value="S17712"/>
</dbReference>
<dbReference type="RefSeq" id="WP_013318067.1">
    <property type="nucleotide sequence ID" value="NC_014500.1"/>
</dbReference>
<dbReference type="SMR" id="Q05526"/>
<dbReference type="STRING" id="198628.Dda3937_03361"/>
<dbReference type="CAZy" id="PL2">
    <property type="family name" value="Polysaccharide Lyase Family 2"/>
</dbReference>
<dbReference type="KEGG" id="ddd:Dda3937_03361"/>
<dbReference type="PATRIC" id="fig|198628.6.peg.2395"/>
<dbReference type="eggNOG" id="ENOG502Z7J0">
    <property type="taxonomic scope" value="Bacteria"/>
</dbReference>
<dbReference type="HOGENOM" id="CLU_036080_0_0_6"/>
<dbReference type="OrthoDB" id="92725at2"/>
<dbReference type="BioCyc" id="MetaCyc:MONOMER-15658"/>
<dbReference type="BRENDA" id="4.2.2.9">
    <property type="organism ID" value="10687"/>
</dbReference>
<dbReference type="UniPathway" id="UPA00545"/>
<dbReference type="Proteomes" id="UP000006859">
    <property type="component" value="Chromosome"/>
</dbReference>
<dbReference type="GO" id="GO:0005737">
    <property type="term" value="C:cytoplasm"/>
    <property type="evidence" value="ECO:0000314"/>
    <property type="project" value="ASAP"/>
</dbReference>
<dbReference type="GO" id="GO:0042597">
    <property type="term" value="C:periplasmic space"/>
    <property type="evidence" value="ECO:0007669"/>
    <property type="project" value="InterPro"/>
</dbReference>
<dbReference type="GO" id="GO:0016837">
    <property type="term" value="F:carbon-oxygen lyase activity, acting on polysaccharides"/>
    <property type="evidence" value="ECO:0000314"/>
    <property type="project" value="ASAP"/>
</dbReference>
<dbReference type="GO" id="GO:0047489">
    <property type="term" value="F:pectate disaccharide-lyase activity"/>
    <property type="evidence" value="ECO:0007669"/>
    <property type="project" value="UniProtKB-EC"/>
</dbReference>
<dbReference type="GO" id="GO:0045490">
    <property type="term" value="P:pectin catabolic process"/>
    <property type="evidence" value="ECO:0000314"/>
    <property type="project" value="ASAP"/>
</dbReference>
<dbReference type="Gene3D" id="1.50.10.20">
    <property type="match status" value="1"/>
</dbReference>
<dbReference type="InterPro" id="IPR010702">
    <property type="entry name" value="Pectate_lyase_2"/>
</dbReference>
<dbReference type="InterPro" id="IPR053649">
    <property type="entry name" value="PL_2"/>
</dbReference>
<dbReference type="NCBIfam" id="NF041904">
    <property type="entry name" value="exo-PATE_PelW"/>
    <property type="match status" value="1"/>
</dbReference>
<dbReference type="Pfam" id="PF06917">
    <property type="entry name" value="Pectate_lyase_2"/>
    <property type="match status" value="1"/>
</dbReference>
<dbReference type="PIRSF" id="PIRSF001432">
    <property type="entry name" value="Pect_lyase"/>
    <property type="match status" value="1"/>
</dbReference>
<comment type="function">
    <text evidence="1">Catalyzes the formation of unsaturated digalacturonates from polygalacturonate or short oligogalacturonates.</text>
</comment>
<comment type="catalytic activity">
    <reaction evidence="1">
        <text>[(1-&gt;4)-alpha-D-galacturonosyl](n) = 4-(4-deoxy-alpha-D-galact-4-enuronosyl)-D-galacturonate + [(1-&gt;4)-alpha-D-galacturonosyl](n-2)</text>
        <dbReference type="Rhea" id="RHEA:57104"/>
        <dbReference type="Rhea" id="RHEA-COMP:14570"/>
        <dbReference type="Rhea" id="RHEA-COMP:14734"/>
        <dbReference type="ChEBI" id="CHEBI:60189"/>
        <dbReference type="ChEBI" id="CHEBI:140523"/>
        <dbReference type="EC" id="4.2.2.9"/>
    </reaction>
</comment>
<comment type="cofactor">
    <cofactor>
        <name>Cu cation</name>
        <dbReference type="ChEBI" id="CHEBI:23378"/>
    </cofactor>
</comment>
<comment type="cofactor">
    <cofactor>
        <name>Mn(2+)</name>
        <dbReference type="ChEBI" id="CHEBI:29035"/>
    </cofactor>
</comment>
<comment type="cofactor">
    <cofactor>
        <name>Ni(2+)</name>
        <dbReference type="ChEBI" id="CHEBI:49786"/>
    </cofactor>
</comment>
<comment type="pathway">
    <text>Glycan metabolism; pectin degradation.</text>
</comment>
<comment type="subcellular location">
    <subcellularLocation>
        <location>Cytoplasm</location>
    </subcellularLocation>
</comment>
<comment type="induction">
    <text>By galacturonate and PGA, and inhibited by EDTA.</text>
</comment>
<comment type="similarity">
    <text evidence="2">Belongs to the polysaccharide lyase 2 family.</text>
</comment>
<evidence type="ECO:0000250" key="1">
    <source>
        <dbReference type="UniProtKB" id="P22751"/>
    </source>
</evidence>
<evidence type="ECO:0000305" key="2"/>
<protein>
    <recommendedName>
        <fullName>Pectate disaccharide-lyase</fullName>
        <ecNumber evidence="1">4.2.2.9</ecNumber>
    </recommendedName>
    <alternativeName>
        <fullName>Exopolygalacturonate lyase</fullName>
        <shortName>ExoPL</shortName>
    </alternativeName>
</protein>
<sequence length="543" mass="62913">MSIFTDLNTSRKWQIDQWLSAVNSHIEKIQQYGHSVVNPTPLLADGFEIKTQSPVVWQFPDGHDAPISNFASQQNWLRLLISMSVITETEKYRHLAFCQSEYFLNRFVDENSGLFYWGGHRFINLDTLASEGPESKSMVHELKHHLPYYEFLHQVNPEKTRHFIQGFWNAHVEDWSCLDLGRHGDYARQRDPDVFLHSRHDVVTPANWPELPLTKGLTFVNAGTDLIYAAFVYARHTGDAHAAAWGKHLYRQYVLARNPETGMPVYQFSSPLQRQPVPADDNQTQSWFGDRAQRQFGPEFGAIAREANVLFRDMRPLLIDNPLAMLDILRHQPDAEILTWVIAGLKNYYQYAYDVNSNSLRPMWNNGQDMTDYCFKRDGYYGKAGTVLKPFPLEGDYLLPLVRAWLLSDDDDLHTLIVTMLSRLEKQGIHQSASPFLLLAITELAHAKQSAQWAEYAWQMAEILFKRYFHHGLFVRSEHHRYVRLDDPFPAILLTLIAACRNKWSEVPAVLTQGGYIHGDYRINGESRVIYDTEFIYPEKLIH</sequence>
<feature type="chain" id="PRO_0000212998" description="Pectate disaccharide-lyase">
    <location>
        <begin position="1"/>
        <end position="543"/>
    </location>
</feature>
<feature type="sequence conflict" description="In Ref. 2; CAA43990." evidence="2" ref="2">
    <original>EFIYPEKLIH</original>
    <variation>GIYLPRKINPLILFLQIHHY</variation>
    <location>
        <begin position="534"/>
        <end position="543"/>
    </location>
</feature>
<reference key="1">
    <citation type="journal article" date="1991" name="Mol. Microbiol.">
        <title>Analysis of an Erwinia chrysanthemi gene cluster involved in pectin degradation.</title>
        <authorList>
            <person name="Condemine G."/>
            <person name="Robert-Baudouy J."/>
        </authorList>
    </citation>
    <scope>PRELIMINARY NUCLEOTIDE SEQUENCE [GENOMIC DNA]</scope>
    <source>
        <strain>3937</strain>
    </source>
</reference>
<reference key="2">
    <citation type="journal article" date="1999" name="J. Bacteriol.">
        <title>The exopolygalacturonate lyase PelW and the oligogalacturonate lyase Ogl, two cytoplasmic enzymes of pectin catabolism in Erwinia chrysanthemi 3937.</title>
        <authorList>
            <person name="Shevchik V.E."/>
            <person name="Condemine G."/>
            <person name="Robert-Baudouy J."/>
            <person name="Hugouvieux-Cotte-Pattat N."/>
        </authorList>
    </citation>
    <scope>NUCLEOTIDE SEQUENCE [GENOMIC DNA]</scope>
    <scope>SEQUENCE REVISION TO C-TERMINUS</scope>
    <source>
        <strain>3937</strain>
    </source>
</reference>
<reference key="3">
    <citation type="journal article" date="2011" name="J. Bacteriol.">
        <title>Genome sequence of the plant-pathogenic bacterium Dickeya dadantii 3937.</title>
        <authorList>
            <person name="Glasner J.D."/>
            <person name="Yang C.H."/>
            <person name="Reverchon S."/>
            <person name="Hugouvieux-Cotte-Pattat N."/>
            <person name="Condemine G."/>
            <person name="Bohin J.P."/>
            <person name="Van Gijsegem F."/>
            <person name="Yang S."/>
            <person name="Franza T."/>
            <person name="Expert D."/>
            <person name="Plunkett G. III"/>
            <person name="San Francisco M.J."/>
            <person name="Charkowski A.O."/>
            <person name="Py B."/>
            <person name="Bell K."/>
            <person name="Rauscher L."/>
            <person name="Rodriguez-Palenzuela P."/>
            <person name="Toussaint A."/>
            <person name="Holeva M.C."/>
            <person name="He S.Y."/>
            <person name="Douet V."/>
            <person name="Boccara M."/>
            <person name="Blanco C."/>
            <person name="Toth I."/>
            <person name="Anderson B.D."/>
            <person name="Biehl B.S."/>
            <person name="Mau B."/>
            <person name="Flynn S.M."/>
            <person name="Barras F."/>
            <person name="Lindeberg M."/>
            <person name="Birch P.R."/>
            <person name="Tsuyumu S."/>
            <person name="Shi X."/>
            <person name="Hibbing M."/>
            <person name="Yap M.N."/>
            <person name="Carpentier M."/>
            <person name="Dassa E."/>
            <person name="Umehara M."/>
            <person name="Kim J.F."/>
            <person name="Rusch M."/>
            <person name="Soni P."/>
            <person name="Mayhew G.F."/>
            <person name="Fouts D.E."/>
            <person name="Gill S.R."/>
            <person name="Blattner F.R."/>
            <person name="Keen N.T."/>
            <person name="Perna N.T."/>
        </authorList>
    </citation>
    <scope>NUCLEOTIDE SEQUENCE [LARGE SCALE GENOMIC DNA]</scope>
    <source>
        <strain>3937</strain>
    </source>
</reference>
<gene>
    <name type="primary">pelW</name>
    <name type="synonym">kdgC</name>
    <name type="ordered locus">Dda3937_03361</name>
</gene>
<accession>Q05526</accession>
<accession>E0SDC5</accession>